<comment type="function">
    <text evidence="1">Catalyzes the phosphorylation of methylthioribose into methylthioribose-1-phosphate.</text>
</comment>
<comment type="catalytic activity">
    <reaction evidence="1">
        <text>5-(methylsulfanyl)-D-ribose + ATP = 5-(methylsulfanyl)-alpha-D-ribose 1-phosphate + ADP + H(+)</text>
        <dbReference type="Rhea" id="RHEA:22312"/>
        <dbReference type="ChEBI" id="CHEBI:15378"/>
        <dbReference type="ChEBI" id="CHEBI:30616"/>
        <dbReference type="ChEBI" id="CHEBI:58533"/>
        <dbReference type="ChEBI" id="CHEBI:78440"/>
        <dbReference type="ChEBI" id="CHEBI:456216"/>
        <dbReference type="EC" id="2.7.1.100"/>
    </reaction>
</comment>
<comment type="pathway">
    <text evidence="1">Amino-acid biosynthesis; L-methionine biosynthesis via salvage pathway; S-methyl-5-thio-alpha-D-ribose 1-phosphate from S-methyl-5'-thioadenosine (hydrolase route): step 2/2.</text>
</comment>
<comment type="subunit">
    <text evidence="1">Homodimer.</text>
</comment>
<comment type="similarity">
    <text evidence="1">Belongs to the methylthioribose kinase family.</text>
</comment>
<accession>Q731R6</accession>
<evidence type="ECO:0000255" key="1">
    <source>
        <dbReference type="HAMAP-Rule" id="MF_01683"/>
    </source>
</evidence>
<dbReference type="EC" id="2.7.1.100" evidence="1"/>
<dbReference type="EMBL" id="AE017194">
    <property type="protein sequence ID" value="AAS43001.1"/>
    <property type="molecule type" value="Genomic_DNA"/>
</dbReference>
<dbReference type="SMR" id="Q731R6"/>
<dbReference type="KEGG" id="bca:BCE_4099"/>
<dbReference type="HOGENOM" id="CLU_033681_0_0_9"/>
<dbReference type="UniPathway" id="UPA00904">
    <property type="reaction ID" value="UER00872"/>
</dbReference>
<dbReference type="Proteomes" id="UP000002527">
    <property type="component" value="Chromosome"/>
</dbReference>
<dbReference type="GO" id="GO:0005524">
    <property type="term" value="F:ATP binding"/>
    <property type="evidence" value="ECO:0007669"/>
    <property type="project" value="UniProtKB-UniRule"/>
</dbReference>
<dbReference type="GO" id="GO:0046522">
    <property type="term" value="F:S-methyl-5-thioribose kinase activity"/>
    <property type="evidence" value="ECO:0007669"/>
    <property type="project" value="UniProtKB-UniRule"/>
</dbReference>
<dbReference type="GO" id="GO:0019509">
    <property type="term" value="P:L-methionine salvage from methylthioadenosine"/>
    <property type="evidence" value="ECO:0007669"/>
    <property type="project" value="UniProtKB-UniRule"/>
</dbReference>
<dbReference type="FunFam" id="3.90.1200.10:FF:000008">
    <property type="entry name" value="Methylthioribose kinase"/>
    <property type="match status" value="1"/>
</dbReference>
<dbReference type="Gene3D" id="3.90.1200.10">
    <property type="match status" value="1"/>
</dbReference>
<dbReference type="Gene3D" id="3.30.200.20">
    <property type="entry name" value="Phosphorylase Kinase, domain 1"/>
    <property type="match status" value="1"/>
</dbReference>
<dbReference type="HAMAP" id="MF_01683">
    <property type="entry name" value="Salvage_MtnK"/>
    <property type="match status" value="1"/>
</dbReference>
<dbReference type="InterPro" id="IPR002575">
    <property type="entry name" value="Aminoglycoside_PTrfase"/>
</dbReference>
<dbReference type="InterPro" id="IPR011009">
    <property type="entry name" value="Kinase-like_dom_sf"/>
</dbReference>
<dbReference type="InterPro" id="IPR009212">
    <property type="entry name" value="Methylthioribose_kinase"/>
</dbReference>
<dbReference type="NCBIfam" id="TIGR01767">
    <property type="entry name" value="MTRK"/>
    <property type="match status" value="1"/>
</dbReference>
<dbReference type="PANTHER" id="PTHR34273">
    <property type="entry name" value="METHYLTHIORIBOSE KINASE"/>
    <property type="match status" value="1"/>
</dbReference>
<dbReference type="PANTHER" id="PTHR34273:SF2">
    <property type="entry name" value="METHYLTHIORIBOSE KINASE"/>
    <property type="match status" value="1"/>
</dbReference>
<dbReference type="Pfam" id="PF01636">
    <property type="entry name" value="APH"/>
    <property type="match status" value="1"/>
</dbReference>
<dbReference type="PIRSF" id="PIRSF031134">
    <property type="entry name" value="MTRK"/>
    <property type="match status" value="1"/>
</dbReference>
<dbReference type="SUPFAM" id="SSF56112">
    <property type="entry name" value="Protein kinase-like (PK-like)"/>
    <property type="match status" value="1"/>
</dbReference>
<organism>
    <name type="scientific">Bacillus cereus (strain ATCC 10987 / NRS 248)</name>
    <dbReference type="NCBI Taxonomy" id="222523"/>
    <lineage>
        <taxon>Bacteria</taxon>
        <taxon>Bacillati</taxon>
        <taxon>Bacillota</taxon>
        <taxon>Bacilli</taxon>
        <taxon>Bacillales</taxon>
        <taxon>Bacillaceae</taxon>
        <taxon>Bacillus</taxon>
        <taxon>Bacillus cereus group</taxon>
    </lineage>
</organism>
<gene>
    <name evidence="1" type="primary">mtnK</name>
    <name type="ordered locus">BCE_4099</name>
</gene>
<sequence>MGYYALTETTAIQYAKEHGYFEKKANVFCHEIGDGNLNYVFKLDDGEKSIIIKQALPYAKVVGESWPLSIKRATIESKALKIFAKYVPDYVPVVHSHDEELAVTVIEDLSRLTITRKGLIDGEEYPLLSQHIGRFLANVLFYTSDFGLQSEEKRGLEGTFVNPDLCKITEDLVFTDPFGHYDTNDYEPELQLAVDELWSDKTLKLKVAQYKYKFLTRKEALIHGDLHTGSIFSSPSETKVIDPEFATYGPFGFDLGQFIANLLLNALSREEEQRSVLFFHIEKTWSYFVDTFTKLWIGEGVEAYTKEKQWLPIILQNIFTDVVGFAGCELIRRTIGLAHVADLDEIANKEKRIQAKKQALYLGKELIKYESKNADIQLFRTLFQQTVSGGVKA</sequence>
<name>MTNK_BACC1</name>
<protein>
    <recommendedName>
        <fullName evidence="1">Methylthioribose kinase</fullName>
        <shortName evidence="1">MTR kinase</shortName>
        <ecNumber evidence="1">2.7.1.100</ecNumber>
    </recommendedName>
</protein>
<reference key="1">
    <citation type="journal article" date="2004" name="Nucleic Acids Res.">
        <title>The genome sequence of Bacillus cereus ATCC 10987 reveals metabolic adaptations and a large plasmid related to Bacillus anthracis pXO1.</title>
        <authorList>
            <person name="Rasko D.A."/>
            <person name="Ravel J."/>
            <person name="Oekstad O.A."/>
            <person name="Helgason E."/>
            <person name="Cer R.Z."/>
            <person name="Jiang L."/>
            <person name="Shores K.A."/>
            <person name="Fouts D.E."/>
            <person name="Tourasse N.J."/>
            <person name="Angiuoli S.V."/>
            <person name="Kolonay J.F."/>
            <person name="Nelson W.C."/>
            <person name="Kolstoe A.-B."/>
            <person name="Fraser C.M."/>
            <person name="Read T.D."/>
        </authorList>
    </citation>
    <scope>NUCLEOTIDE SEQUENCE [LARGE SCALE GENOMIC DNA]</scope>
    <source>
        <strain>ATCC 10987 / NRS 248</strain>
    </source>
</reference>
<proteinExistence type="inferred from homology"/>
<feature type="chain" id="PRO_0000357330" description="Methylthioribose kinase">
    <location>
        <begin position="1"/>
        <end position="393"/>
    </location>
</feature>
<feature type="binding site" evidence="1">
    <location>
        <position position="38"/>
    </location>
    <ligand>
        <name>ATP</name>
        <dbReference type="ChEBI" id="CHEBI:30616"/>
    </ligand>
</feature>
<feature type="binding site" evidence="1">
    <location>
        <position position="53"/>
    </location>
    <ligand>
        <name>ATP</name>
        <dbReference type="ChEBI" id="CHEBI:30616"/>
    </ligand>
</feature>
<feature type="binding site" evidence="1">
    <location>
        <begin position="107"/>
        <end position="109"/>
    </location>
    <ligand>
        <name>ATP</name>
        <dbReference type="ChEBI" id="CHEBI:30616"/>
    </ligand>
</feature>
<feature type="binding site" evidence="1">
    <location>
        <position position="225"/>
    </location>
    <ligand>
        <name>substrate</name>
    </ligand>
</feature>
<feature type="binding site" evidence="1">
    <location>
        <begin position="242"/>
        <end position="244"/>
    </location>
    <ligand>
        <name>ATP</name>
        <dbReference type="ChEBI" id="CHEBI:30616"/>
    </ligand>
</feature>
<feature type="binding site" evidence="1">
    <location>
        <position position="332"/>
    </location>
    <ligand>
        <name>substrate</name>
    </ligand>
</feature>
<keyword id="KW-0028">Amino-acid biosynthesis</keyword>
<keyword id="KW-0067">ATP-binding</keyword>
<keyword id="KW-0418">Kinase</keyword>
<keyword id="KW-0486">Methionine biosynthesis</keyword>
<keyword id="KW-0547">Nucleotide-binding</keyword>
<keyword id="KW-0808">Transferase</keyword>